<comment type="function">
    <text evidence="1">May be involved in dorsoventral axis formation. Seems to antagonize BMP signaling by forming ternary complexes with CHRD and BMPs, thereby preventing BMPs from binding to their receptors. In addition to the anti-BMP function, also has pro-BMP activity, partly mediated by cleavage and degradation of CHRD, which releases BMPs from ternary complexes. May be an important modulator of BMP-regulated cartilage development and chondrocyte differentiation. May play a role in thymocyte development (By similarity).</text>
</comment>
<comment type="subunit">
    <text evidence="1">Interacts with CHRD and BMP4. This interaction enhances CHRD/BMP4 complex formation. Interacts with BMP7 (By similarity).</text>
</comment>
<comment type="subcellular location">
    <subcellularLocation>
        <location evidence="1">Secreted</location>
    </subcellularLocation>
</comment>
<comment type="domain">
    <text evidence="1">The N-terminal domain is sufficient to interact with BMP4.</text>
</comment>
<comment type="similarity">
    <text evidence="3">Belongs to the twisted gastrulation protein family.</text>
</comment>
<evidence type="ECO:0000250" key="1"/>
<evidence type="ECO:0000255" key="2"/>
<evidence type="ECO:0000305" key="3"/>
<reference key="1">
    <citation type="submission" date="2004-11" db="EMBL/GenBank/DDBJ databases">
        <authorList>
            <consortium name="The German cDNA consortium"/>
        </authorList>
    </citation>
    <scope>NUCLEOTIDE SEQUENCE [LARGE SCALE MRNA]</scope>
    <source>
        <tissue>Kidney</tissue>
    </source>
</reference>
<protein>
    <recommendedName>
        <fullName>Twisted gastrulation protein homolog 1</fullName>
    </recommendedName>
</protein>
<keyword id="KW-0217">Developmental protein</keyword>
<keyword id="KW-0325">Glycoprotein</keyword>
<keyword id="KW-1185">Reference proteome</keyword>
<keyword id="KW-0964">Secreted</keyword>
<keyword id="KW-0732">Signal</keyword>
<name>TWSG1_PONAB</name>
<organism>
    <name type="scientific">Pongo abelii</name>
    <name type="common">Sumatran orangutan</name>
    <name type="synonym">Pongo pygmaeus abelii</name>
    <dbReference type="NCBI Taxonomy" id="9601"/>
    <lineage>
        <taxon>Eukaryota</taxon>
        <taxon>Metazoa</taxon>
        <taxon>Chordata</taxon>
        <taxon>Craniata</taxon>
        <taxon>Vertebrata</taxon>
        <taxon>Euteleostomi</taxon>
        <taxon>Mammalia</taxon>
        <taxon>Eutheria</taxon>
        <taxon>Euarchontoglires</taxon>
        <taxon>Primates</taxon>
        <taxon>Haplorrhini</taxon>
        <taxon>Catarrhini</taxon>
        <taxon>Hominidae</taxon>
        <taxon>Pongo</taxon>
    </lineage>
</organism>
<dbReference type="EMBL" id="CR858897">
    <property type="protein sequence ID" value="CAH91096.1"/>
    <property type="molecule type" value="mRNA"/>
</dbReference>
<dbReference type="RefSeq" id="NP_001125639.1">
    <property type="nucleotide sequence ID" value="NM_001132167.2"/>
</dbReference>
<dbReference type="SMR" id="Q5RAW4"/>
<dbReference type="STRING" id="9601.ENSPPYP00000010110"/>
<dbReference type="GlyCosmos" id="Q5RAW4">
    <property type="glycosylation" value="2 sites, No reported glycans"/>
</dbReference>
<dbReference type="GeneID" id="100172557"/>
<dbReference type="KEGG" id="pon:100172557"/>
<dbReference type="CTD" id="57045"/>
<dbReference type="eggNOG" id="ENOG502QRE9">
    <property type="taxonomic scope" value="Eukaryota"/>
</dbReference>
<dbReference type="InParanoid" id="Q5RAW4"/>
<dbReference type="OrthoDB" id="10037323at2759"/>
<dbReference type="Proteomes" id="UP000001595">
    <property type="component" value="Unplaced"/>
</dbReference>
<dbReference type="GO" id="GO:0005615">
    <property type="term" value="C:extracellular space"/>
    <property type="evidence" value="ECO:0007669"/>
    <property type="project" value="TreeGrafter"/>
</dbReference>
<dbReference type="GO" id="GO:0030510">
    <property type="term" value="P:regulation of BMP signaling pathway"/>
    <property type="evidence" value="ECO:0007669"/>
    <property type="project" value="TreeGrafter"/>
</dbReference>
<dbReference type="InterPro" id="IPR006761">
    <property type="entry name" value="Tsg"/>
</dbReference>
<dbReference type="PANTHER" id="PTHR12312:SF17">
    <property type="entry name" value="TWISTED GASTRULATION PROTEIN HOMOLOG 1"/>
    <property type="match status" value="1"/>
</dbReference>
<dbReference type="PANTHER" id="PTHR12312">
    <property type="entry name" value="TWISTED GASTRULATION PROTEIN HOMOLOG 1-A-RELATED"/>
    <property type="match status" value="1"/>
</dbReference>
<dbReference type="Pfam" id="PF04668">
    <property type="entry name" value="Tsg"/>
    <property type="match status" value="1"/>
</dbReference>
<dbReference type="Pfam" id="PF23782">
    <property type="entry name" value="Tsg_N"/>
    <property type="match status" value="1"/>
</dbReference>
<feature type="signal peptide" evidence="2">
    <location>
        <begin position="1"/>
        <end position="25"/>
    </location>
</feature>
<feature type="chain" id="PRO_0000278810" description="Twisted gastrulation protein homolog 1">
    <location>
        <begin position="26"/>
        <end position="223"/>
    </location>
</feature>
<feature type="glycosylation site" description="N-linked (GlcNAc...) asparagine" evidence="2">
    <location>
        <position position="52"/>
    </location>
</feature>
<feature type="glycosylation site" description="N-linked (GlcNAc...) asparagine" evidence="2">
    <location>
        <position position="81"/>
    </location>
</feature>
<sequence>MKLHYVAVLTLAILMFLTWLPASLSCNKALCASDVSKCLIQELCQCRPGEGNCSCCKECMLCLEALWDECCDCVGMCNPRNYSDTPPTSKSTVEELHEPIPSLFRALTEGDTQLNWNIVSFPVAEELSHHENLVSFLETVNQPHHQNVSVPSNNVHAPYSSDKEHMCTVVYFDDCMSIHQCKISCESMGASKYRWFHNACCECIGPECIDYGSKTVKCMNCMF</sequence>
<gene>
    <name type="primary">TWSG1</name>
    <name type="synonym">TSG</name>
</gene>
<accession>Q5RAW4</accession>
<proteinExistence type="evidence at transcript level"/>